<organism>
    <name type="scientific">Gallus gallus</name>
    <name type="common">Chicken</name>
    <dbReference type="NCBI Taxonomy" id="9031"/>
    <lineage>
        <taxon>Eukaryota</taxon>
        <taxon>Metazoa</taxon>
        <taxon>Chordata</taxon>
        <taxon>Craniata</taxon>
        <taxon>Vertebrata</taxon>
        <taxon>Euteleostomi</taxon>
        <taxon>Archelosauria</taxon>
        <taxon>Archosauria</taxon>
        <taxon>Dinosauria</taxon>
        <taxon>Saurischia</taxon>
        <taxon>Theropoda</taxon>
        <taxon>Coelurosauria</taxon>
        <taxon>Aves</taxon>
        <taxon>Neognathae</taxon>
        <taxon>Galloanserae</taxon>
        <taxon>Galliformes</taxon>
        <taxon>Phasianidae</taxon>
        <taxon>Phasianinae</taxon>
        <taxon>Gallus</taxon>
    </lineage>
</organism>
<comment type="function">
    <text evidence="1">Involved in neural development, regulating the establishment of proper connectivity within the nervous system. May function as a cellular signal transducer (By similarity).</text>
</comment>
<comment type="function">
    <molecule>Teneurin C-terminal-associated peptide</molecule>
    <text evidence="1">Plays a role in the regulation of neuroplasticity in the limbic system. Mediates a rapid reorganization of actin- and tubulin-based cytoskeleton elements with an increase in dendritic arborization and spine density formation of neurons in the hippocampus and amygdala. Induces BDNF transcription inhibition in neurons. Activates the mitogen-activated protein (MAP) kinase 2 (MEK2) and extracellular signal-regulated kinase (ERK) cascade (By similarity).</text>
</comment>
<comment type="function">
    <molecule>Ten-1 intracellular domain</molecule>
    <text evidence="7">Induces gene transcription activation.</text>
</comment>
<comment type="subunit">
    <text evidence="1 7">Homodimer; disulfide-linked. Heterodimer with other teneurins (By similarity). Ten-1 ICD interacts with SORBS1 (via third SH3 domain). Interacts with MBD1 isoform 2.</text>
</comment>
<comment type="subcellular location">
    <subcellularLocation>
        <location evidence="7 8">Cell membrane</location>
        <topology evidence="7 8">Single-pass membrane protein</topology>
    </subcellularLocation>
</comment>
<comment type="subcellular location">
    <molecule>Ten-1 intracellular domain</molecule>
    <subcellularLocation>
        <location>Nucleus</location>
    </subcellularLocation>
    <subcellularLocation>
        <location>Nucleus speckle</location>
    </subcellularLocation>
    <subcellularLocation>
        <location>Nucleus matrix</location>
    </subcellularLocation>
    <subcellularLocation>
        <location>Cytoplasm</location>
        <location>Cytoskeleton</location>
    </subcellularLocation>
    <text>Colocalizes with SORBS1 in the nucleus and to the cell periphery. Colocalizes with MBD1 and PML in foci associated with the nuclear matrix.</text>
</comment>
<comment type="subcellular location">
    <molecule>Teneurin C-terminal-associated peptide</molecule>
    <subcellularLocation>
        <location evidence="1">Nucleus</location>
    </subcellularLocation>
    <subcellularLocation>
        <location evidence="1">Cytoplasm</location>
    </subcellularLocation>
    <subcellularLocation>
        <location evidence="1">Cell membrane</location>
    </subcellularLocation>
</comment>
<comment type="tissue specificity">
    <text evidence="6">Expressed in the neurons of the developing visual system and in fetal brain.</text>
</comment>
<comment type="developmental stage">
    <text evidence="8">Expressed in mitral cell, glomerular layer of the olfactory bulb, hippocampus, posteromedial cortex piriformis, nucleus rotundu, laminae 2 and 5 within the inner plexiform layer of the retina, stratum griseum, nucleus laminaris and magnocellularis in the hindbrain and Purkinje cells at embryonic day (E) 17 (at protein level). At 14 dpc, it is concentrated in the retina, the optic tectum and in specific nuclei in the dorsal diencephalon, it is concentrated in the stratum griseum centrale. Expression is seen in diencephalon, concentrated in the rotund nucleus and in the neighboring ovoid nucleus. Similar expression patterns are seen at 17 dpc.</text>
</comment>
<comment type="domain">
    <text>EGF-like domains 2 and 5 which have an odd number of cysteines might enable the formation of intermolecular disulfide bonds.</text>
</comment>
<comment type="domain">
    <text>Cytoplasmic proline-rich regions could serve as docking domains for intracellular SH3-containing proteins.</text>
</comment>
<comment type="PTM">
    <molecule>Teneurin C-terminal-associated peptide</molecule>
    <text evidence="1">Derives from the plasma membrane form by proteolytic processing. Further proteolytic cleavage may be generated (By similarity).</text>
</comment>
<comment type="PTM">
    <molecule>Ten-1 intracellular domain</molecule>
    <text evidence="7 8">Derives from the plasma membrane form by proteolytic cleavage and translocates to the nucleus.</text>
</comment>
<comment type="miscellaneous">
    <molecule>Teneurin C-terminal-associated peptide</molecule>
    <text evidence="1">Binds to the plasma membrane and may be internalized by a receptor- and caveolae-mediated endocytosis manner to reach cytosolic compartments in a dynamin-dependent manner.</text>
</comment>
<comment type="similarity">
    <text evidence="9">Belongs to the tenascin family. Teneurin subfamily.</text>
</comment>
<evidence type="ECO:0000250" key="1"/>
<evidence type="ECO:0000255" key="2"/>
<evidence type="ECO:0000255" key="3">
    <source>
        <dbReference type="PROSITE-ProRule" id="PRU00076"/>
    </source>
</evidence>
<evidence type="ECO:0000255" key="4">
    <source>
        <dbReference type="PROSITE-ProRule" id="PRU00694"/>
    </source>
</evidence>
<evidence type="ECO:0000256" key="5">
    <source>
        <dbReference type="SAM" id="MobiDB-lite"/>
    </source>
</evidence>
<evidence type="ECO:0000269" key="6">
    <source>
    </source>
</evidence>
<evidence type="ECO:0000269" key="7">
    <source>
    </source>
</evidence>
<evidence type="ECO:0000269" key="8">
    <source>
    </source>
</evidence>
<evidence type="ECO:0000305" key="9"/>
<feature type="chain" id="PRO_0000259500" description="Teneurin-1">
    <location>
        <begin position="1"/>
        <end position="2705"/>
    </location>
</feature>
<feature type="chain" id="PRO_0000421009" description="Ten-1 intracellular domain">
    <location>
        <begin position="1"/>
        <end status="unknown"/>
    </location>
</feature>
<feature type="chain" id="PRO_0000421010" description="Teneurin C-terminal-associated peptide" evidence="1">
    <location>
        <begin position="2576"/>
        <end position="2705"/>
    </location>
</feature>
<feature type="topological domain" description="Cytoplasmic" evidence="2">
    <location>
        <begin position="1"/>
        <end position="305"/>
    </location>
</feature>
<feature type="transmembrane region" description="Helical" evidence="2">
    <location>
        <begin position="306"/>
        <end position="326"/>
    </location>
</feature>
<feature type="topological domain" description="Extracellular" evidence="2">
    <location>
        <begin position="327"/>
        <end position="2705"/>
    </location>
</feature>
<feature type="domain" description="Teneurin N-terminal" evidence="4">
    <location>
        <begin position="1"/>
        <end position="299"/>
    </location>
</feature>
<feature type="domain" description="EGF-like 1" evidence="3">
    <location>
        <begin position="509"/>
        <end position="540"/>
    </location>
</feature>
<feature type="domain" description="EGF-like 2" evidence="3">
    <location>
        <begin position="541"/>
        <end position="572"/>
    </location>
</feature>
<feature type="domain" description="EGF-like 3" evidence="3">
    <location>
        <begin position="573"/>
        <end position="605"/>
    </location>
</feature>
<feature type="domain" description="EGF-like 4" evidence="3">
    <location>
        <begin position="606"/>
        <end position="638"/>
    </location>
</feature>
<feature type="domain" description="EGF-like 5" evidence="3">
    <location>
        <begin position="639"/>
        <end position="672"/>
    </location>
</feature>
<feature type="domain" description="EGF-like 6" evidence="3">
    <location>
        <begin position="673"/>
        <end position="702"/>
    </location>
</feature>
<feature type="domain" description="EGF-like 7" evidence="3">
    <location>
        <begin position="703"/>
        <end position="734"/>
    </location>
</feature>
<feature type="domain" description="EGF-like 8" evidence="3">
    <location>
        <begin position="735"/>
        <end position="769"/>
    </location>
</feature>
<feature type="repeat" description="NHL 1">
    <location>
        <begin position="1167"/>
        <end position="1192"/>
    </location>
</feature>
<feature type="repeat" description="NHL 2">
    <location>
        <begin position="1202"/>
        <end position="1246"/>
    </location>
</feature>
<feature type="repeat" description="NHL 3">
    <location>
        <begin position="1272"/>
        <end position="1316"/>
    </location>
</feature>
<feature type="repeat" description="NHL 4">
    <location>
        <begin position="1331"/>
        <end position="1382"/>
    </location>
</feature>
<feature type="repeat" description="NHL 5">
    <location>
        <begin position="1461"/>
        <end position="1504"/>
    </location>
</feature>
<feature type="repeat" description="YD 1">
    <location>
        <begin position="1514"/>
        <end position="1533"/>
    </location>
</feature>
<feature type="repeat" description="YD 2">
    <location>
        <begin position="1550"/>
        <end position="1570"/>
    </location>
</feature>
<feature type="repeat" description="YD 3">
    <location>
        <begin position="1588"/>
        <end position="1612"/>
    </location>
</feature>
<feature type="repeat" description="YD 4">
    <location>
        <begin position="1613"/>
        <end position="1634"/>
    </location>
</feature>
<feature type="repeat" description="YD 5">
    <location>
        <begin position="1635"/>
        <end position="1655"/>
    </location>
</feature>
<feature type="repeat" description="YD 6">
    <location>
        <begin position="1825"/>
        <end position="1844"/>
    </location>
</feature>
<feature type="repeat" description="YD 7">
    <location>
        <begin position="1845"/>
        <end position="1865"/>
    </location>
</feature>
<feature type="repeat" description="YD 8">
    <location>
        <begin position="1866"/>
        <end position="1884"/>
    </location>
</feature>
<feature type="repeat" description="YD 9">
    <location>
        <begin position="1885"/>
        <end position="1905"/>
    </location>
</feature>
<feature type="repeat" description="YD 10">
    <location>
        <begin position="1913"/>
        <end position="1929"/>
    </location>
</feature>
<feature type="repeat" description="YD 11">
    <location>
        <begin position="1930"/>
        <end position="1949"/>
    </location>
</feature>
<feature type="repeat" description="YD 12">
    <location>
        <begin position="1950"/>
        <end position="1969"/>
    </location>
</feature>
<feature type="repeat" description="YD 13">
    <location>
        <begin position="1972"/>
        <end position="1992"/>
    </location>
</feature>
<feature type="repeat" description="YD 14">
    <location>
        <begin position="1995"/>
        <end position="2015"/>
    </location>
</feature>
<feature type="repeat" description="YD 15">
    <location>
        <begin position="2065"/>
        <end position="2085"/>
    </location>
</feature>
<feature type="repeat" description="YD 16">
    <location>
        <begin position="2093"/>
        <end position="2113"/>
    </location>
</feature>
<feature type="repeat" description="YD 17">
    <location>
        <begin position="2133"/>
        <end position="2153"/>
    </location>
</feature>
<feature type="repeat" description="YD 18">
    <location>
        <begin position="2154"/>
        <end position="2174"/>
    </location>
</feature>
<feature type="repeat" description="YD 19">
    <location>
        <begin position="2176"/>
        <end position="2196"/>
    </location>
</feature>
<feature type="repeat" description="YD 20">
    <location>
        <begin position="2208"/>
        <end position="2228"/>
    </location>
</feature>
<feature type="repeat" description="YD 21">
    <location>
        <begin position="2230"/>
        <end position="2250"/>
    </location>
</feature>
<feature type="repeat" description="YD 22">
    <location>
        <begin position="2276"/>
        <end position="2293"/>
    </location>
</feature>
<feature type="repeat" description="YD 23">
    <location>
        <begin position="2294"/>
        <end position="2317"/>
    </location>
</feature>
<feature type="region of interest" description="Disordered" evidence="5">
    <location>
        <begin position="1"/>
        <end position="73"/>
    </location>
</feature>
<feature type="region of interest" description="Disordered" evidence="5">
    <location>
        <begin position="135"/>
        <end position="222"/>
    </location>
</feature>
<feature type="short sequence motif" description="Nuclear localization signal (NLS)">
    <location>
        <begin position="62"/>
        <end position="65"/>
    </location>
</feature>
<feature type="short sequence motif" description="Required for interaction with SORBS1 (Ten-1 ICD form)">
    <location>
        <begin position="271"/>
        <end position="278"/>
    </location>
</feature>
<feature type="compositionally biased region" description="Basic and acidic residues" evidence="5">
    <location>
        <begin position="32"/>
        <end position="46"/>
    </location>
</feature>
<feature type="compositionally biased region" description="Polar residues" evidence="5">
    <location>
        <begin position="135"/>
        <end position="147"/>
    </location>
</feature>
<feature type="compositionally biased region" description="Basic and acidic residues" evidence="5">
    <location>
        <begin position="148"/>
        <end position="157"/>
    </location>
</feature>
<feature type="compositionally biased region" description="Pro residues" evidence="5">
    <location>
        <begin position="173"/>
        <end position="182"/>
    </location>
</feature>
<feature type="site" description="Cleavage" evidence="9">
    <location>
        <begin position="2575"/>
        <end position="2576"/>
    </location>
</feature>
<feature type="glycosylation site" description="N-linked (GlcNAc...) asparagine" evidence="2">
    <location>
        <position position="414"/>
    </location>
</feature>
<feature type="glycosylation site" description="N-linked (GlcNAc...) asparagine" evidence="2">
    <location>
        <position position="878"/>
    </location>
</feature>
<feature type="glycosylation site" description="N-linked (GlcNAc...) asparagine" evidence="2">
    <location>
        <position position="1057"/>
    </location>
</feature>
<feature type="glycosylation site" description="N-linked (GlcNAc...) asparagine" evidence="2">
    <location>
        <position position="1530"/>
    </location>
</feature>
<feature type="glycosylation site" description="N-linked (GlcNAc...) asparagine" evidence="2">
    <location>
        <position position="1547"/>
    </location>
</feature>
<feature type="glycosylation site" description="N-linked (GlcNAc...) asparagine" evidence="2">
    <location>
        <position position="1643"/>
    </location>
</feature>
<feature type="glycosylation site" description="N-linked (GlcNAc...) asparagine" evidence="2">
    <location>
        <position position="1679"/>
    </location>
</feature>
<feature type="glycosylation site" description="N-linked (GlcNAc...) asparagine" evidence="2">
    <location>
        <position position="1737"/>
    </location>
</feature>
<feature type="glycosylation site" description="N-linked (GlcNAc...) asparagine" evidence="2">
    <location>
        <position position="1761"/>
    </location>
</feature>
<feature type="glycosylation site" description="N-linked (GlcNAc...) asparagine" evidence="2">
    <location>
        <position position="1822"/>
    </location>
</feature>
<feature type="glycosylation site" description="N-linked (GlcNAc...) asparagine" evidence="2">
    <location>
        <position position="2125"/>
    </location>
</feature>
<feature type="glycosylation site" description="N-linked (GlcNAc...) asparagine" evidence="2">
    <location>
        <position position="2265"/>
    </location>
</feature>
<feature type="glycosylation site" description="N-linked (GlcNAc...) asparagine" evidence="2">
    <location>
        <position position="2582"/>
    </location>
</feature>
<feature type="disulfide bond" evidence="3">
    <location>
        <begin position="513"/>
        <end position="523"/>
    </location>
</feature>
<feature type="disulfide bond" evidence="3">
    <location>
        <begin position="517"/>
        <end position="528"/>
    </location>
</feature>
<feature type="disulfide bond" evidence="3">
    <location>
        <begin position="530"/>
        <end position="539"/>
    </location>
</feature>
<feature type="disulfide bond" evidence="3">
    <location>
        <begin position="548"/>
        <end position="559"/>
    </location>
</feature>
<feature type="disulfide bond" evidence="3">
    <location>
        <begin position="561"/>
        <end position="570"/>
    </location>
</feature>
<feature type="disulfide bond" evidence="3">
    <location>
        <begin position="577"/>
        <end position="588"/>
    </location>
</feature>
<feature type="disulfide bond" evidence="3">
    <location>
        <begin position="582"/>
        <end position="593"/>
    </location>
</feature>
<feature type="disulfide bond" evidence="3">
    <location>
        <begin position="595"/>
        <end position="604"/>
    </location>
</feature>
<feature type="disulfide bond" evidence="3">
    <location>
        <begin position="609"/>
        <end position="620"/>
    </location>
</feature>
<feature type="disulfide bond" evidence="3">
    <location>
        <begin position="614"/>
        <end position="625"/>
    </location>
</feature>
<feature type="disulfide bond" evidence="3">
    <location>
        <begin position="627"/>
        <end position="636"/>
    </location>
</feature>
<feature type="disulfide bond" evidence="3">
    <location>
        <begin position="647"/>
        <end position="660"/>
    </location>
</feature>
<feature type="disulfide bond" evidence="3">
    <location>
        <begin position="662"/>
        <end position="671"/>
    </location>
</feature>
<feature type="disulfide bond" evidence="3">
    <location>
        <begin position="676"/>
        <end position="686"/>
    </location>
</feature>
<feature type="disulfide bond" evidence="3">
    <location>
        <begin position="680"/>
        <end position="691"/>
    </location>
</feature>
<feature type="disulfide bond" evidence="3">
    <location>
        <begin position="693"/>
        <end position="702"/>
    </location>
</feature>
<feature type="disulfide bond" evidence="3">
    <location>
        <begin position="707"/>
        <end position="717"/>
    </location>
</feature>
<feature type="disulfide bond" evidence="3">
    <location>
        <begin position="711"/>
        <end position="722"/>
    </location>
</feature>
<feature type="disulfide bond" evidence="3">
    <location>
        <begin position="724"/>
        <end position="733"/>
    </location>
</feature>
<feature type="disulfide bond" evidence="3">
    <location>
        <begin position="738"/>
        <end position="748"/>
    </location>
</feature>
<feature type="disulfide bond" evidence="3">
    <location>
        <begin position="742"/>
        <end position="757"/>
    </location>
</feature>
<feature type="disulfide bond" evidence="3">
    <location>
        <begin position="759"/>
        <end position="768"/>
    </location>
</feature>
<feature type="mutagenesis site" description="Inhibits translocation to the nucleus (Ten-1 ICD form)." evidence="8">
    <original>RKRK</original>
    <variation>AAAA</variation>
    <location>
        <begin position="62"/>
        <end position="65"/>
    </location>
</feature>
<keyword id="KW-1003">Cell membrane</keyword>
<keyword id="KW-0165">Cleavage on pair of basic residues</keyword>
<keyword id="KW-0963">Cytoplasm</keyword>
<keyword id="KW-0206">Cytoskeleton</keyword>
<keyword id="KW-1015">Disulfide bond</keyword>
<keyword id="KW-0245">EGF-like domain</keyword>
<keyword id="KW-0325">Glycoprotein</keyword>
<keyword id="KW-0472">Membrane</keyword>
<keyword id="KW-0527">Neuropeptide</keyword>
<keyword id="KW-0539">Nucleus</keyword>
<keyword id="KW-1185">Reference proteome</keyword>
<keyword id="KW-0677">Repeat</keyword>
<keyword id="KW-0678">Repressor</keyword>
<keyword id="KW-0346">Stress response</keyword>
<keyword id="KW-0804">Transcription</keyword>
<keyword id="KW-0805">Transcription regulation</keyword>
<keyword id="KW-0812">Transmembrane</keyword>
<keyword id="KW-1133">Transmembrane helix</keyword>
<dbReference type="EMBL" id="AJ238613">
    <property type="protein sequence ID" value="CAB43098.1"/>
    <property type="molecule type" value="mRNA"/>
</dbReference>
<dbReference type="RefSeq" id="NP_990193.1">
    <property type="nucleotide sequence ID" value="NM_204862.1"/>
</dbReference>
<dbReference type="SMR" id="Q9W6V6"/>
<dbReference type="FunCoup" id="Q9W6V6">
    <property type="interactions" value="142"/>
</dbReference>
<dbReference type="MINT" id="Q9W6V6"/>
<dbReference type="STRING" id="9031.ENSGALP00000057292"/>
<dbReference type="GlyCosmos" id="Q9W6V6">
    <property type="glycosylation" value="13 sites, No reported glycans"/>
</dbReference>
<dbReference type="GlyGen" id="Q9W6V6">
    <property type="glycosylation" value="15 sites"/>
</dbReference>
<dbReference type="PaxDb" id="9031-ENSGALP00000038367"/>
<dbReference type="GeneID" id="395668"/>
<dbReference type="KEGG" id="gga:395668"/>
<dbReference type="CTD" id="10178"/>
<dbReference type="VEuPathDB" id="HostDB:geneid_395668"/>
<dbReference type="eggNOG" id="KOG4659">
    <property type="taxonomic scope" value="Eukaryota"/>
</dbReference>
<dbReference type="InParanoid" id="Q9W6V6"/>
<dbReference type="OrthoDB" id="442731at2759"/>
<dbReference type="PhylomeDB" id="Q9W6V6"/>
<dbReference type="PRO" id="PR:Q9W6V6"/>
<dbReference type="Proteomes" id="UP000000539">
    <property type="component" value="Unassembled WGS sequence"/>
</dbReference>
<dbReference type="GO" id="GO:0005737">
    <property type="term" value="C:cytoplasm"/>
    <property type="evidence" value="ECO:0000314"/>
    <property type="project" value="UniProtKB"/>
</dbReference>
<dbReference type="GO" id="GO:0005856">
    <property type="term" value="C:cytoskeleton"/>
    <property type="evidence" value="ECO:0000314"/>
    <property type="project" value="UniProtKB"/>
</dbReference>
<dbReference type="GO" id="GO:0005783">
    <property type="term" value="C:endoplasmic reticulum"/>
    <property type="evidence" value="ECO:0000314"/>
    <property type="project" value="UniProtKB"/>
</dbReference>
<dbReference type="GO" id="GO:0005794">
    <property type="term" value="C:Golgi apparatus"/>
    <property type="evidence" value="ECO:0000314"/>
    <property type="project" value="UniProtKB"/>
</dbReference>
<dbReference type="GO" id="GO:0043005">
    <property type="term" value="C:neuron projection"/>
    <property type="evidence" value="ECO:0000318"/>
    <property type="project" value="GO_Central"/>
</dbReference>
<dbReference type="GO" id="GO:0016363">
    <property type="term" value="C:nuclear matrix"/>
    <property type="evidence" value="ECO:0000314"/>
    <property type="project" value="UniProtKB"/>
</dbReference>
<dbReference type="GO" id="GO:0016607">
    <property type="term" value="C:nuclear speck"/>
    <property type="evidence" value="ECO:0000314"/>
    <property type="project" value="UniProtKB"/>
</dbReference>
<dbReference type="GO" id="GO:0005634">
    <property type="term" value="C:nucleus"/>
    <property type="evidence" value="ECO:0000314"/>
    <property type="project" value="UniProtKB"/>
</dbReference>
<dbReference type="GO" id="GO:0048471">
    <property type="term" value="C:perinuclear region of cytoplasm"/>
    <property type="evidence" value="ECO:0000250"/>
    <property type="project" value="UniProtKB"/>
</dbReference>
<dbReference type="GO" id="GO:0005886">
    <property type="term" value="C:plasma membrane"/>
    <property type="evidence" value="ECO:0000314"/>
    <property type="project" value="UniProtKB"/>
</dbReference>
<dbReference type="GO" id="GO:0050839">
    <property type="term" value="F:cell adhesion molecule binding"/>
    <property type="evidence" value="ECO:0000318"/>
    <property type="project" value="GO_Central"/>
</dbReference>
<dbReference type="GO" id="GO:0046982">
    <property type="term" value="F:protein heterodimerization activity"/>
    <property type="evidence" value="ECO:0000250"/>
    <property type="project" value="UniProtKB"/>
</dbReference>
<dbReference type="GO" id="GO:0042803">
    <property type="term" value="F:protein homodimerization activity"/>
    <property type="evidence" value="ECO:0000250"/>
    <property type="project" value="UniProtKB"/>
</dbReference>
<dbReference type="GO" id="GO:0048666">
    <property type="term" value="P:neuron development"/>
    <property type="evidence" value="ECO:0000318"/>
    <property type="project" value="GO_Central"/>
</dbReference>
<dbReference type="GO" id="GO:0007218">
    <property type="term" value="P:neuropeptide signaling pathway"/>
    <property type="evidence" value="ECO:0007669"/>
    <property type="project" value="UniProtKB-KW"/>
</dbReference>
<dbReference type="GO" id="GO:0030838">
    <property type="term" value="P:positive regulation of actin filament polymerization"/>
    <property type="evidence" value="ECO:0000250"/>
    <property type="project" value="UniProtKB"/>
</dbReference>
<dbReference type="GO" id="GO:0051491">
    <property type="term" value="P:positive regulation of filopodium assembly"/>
    <property type="evidence" value="ECO:0000250"/>
    <property type="project" value="UniProtKB"/>
</dbReference>
<dbReference type="GO" id="GO:0090316">
    <property type="term" value="P:positive regulation of intracellular protein transport"/>
    <property type="evidence" value="ECO:0000314"/>
    <property type="project" value="UniProtKB"/>
</dbReference>
<dbReference type="GO" id="GO:0043406">
    <property type="term" value="P:positive regulation of MAP kinase activity"/>
    <property type="evidence" value="ECO:0000250"/>
    <property type="project" value="UniProtKB"/>
</dbReference>
<dbReference type="GO" id="GO:0033138">
    <property type="term" value="P:positive regulation of peptidyl-serine phosphorylation"/>
    <property type="evidence" value="ECO:0000250"/>
    <property type="project" value="UniProtKB"/>
</dbReference>
<dbReference type="GO" id="GO:0006359">
    <property type="term" value="P:regulation of transcription by RNA polymerase III"/>
    <property type="evidence" value="ECO:0000250"/>
    <property type="project" value="UniProtKB"/>
</dbReference>
<dbReference type="CDD" id="cd00054">
    <property type="entry name" value="EGF_CA"/>
    <property type="match status" value="2"/>
</dbReference>
<dbReference type="FunFam" id="2.180.10.10:FF:000019">
    <property type="entry name" value="Teneurin transmembrane protein 1"/>
    <property type="match status" value="1"/>
</dbReference>
<dbReference type="FunFam" id="2.10.25.10:FF:000016">
    <property type="entry name" value="Teneurin transmembrane protein 2"/>
    <property type="match status" value="1"/>
</dbReference>
<dbReference type="FunFam" id="2.10.25.10:FF:000021">
    <property type="entry name" value="Teneurin transmembrane protein 2"/>
    <property type="match status" value="2"/>
</dbReference>
<dbReference type="FunFam" id="2.10.25.10:FF:000013">
    <property type="entry name" value="Teneurin transmembrane protein 4"/>
    <property type="match status" value="1"/>
</dbReference>
<dbReference type="FunFam" id="2.120.10.30:FF:000005">
    <property type="entry name" value="Teneurin transmembrane protein 4"/>
    <property type="match status" value="1"/>
</dbReference>
<dbReference type="FunFam" id="2.120.10.30:FF:000006">
    <property type="entry name" value="Teneurin transmembrane protein 4"/>
    <property type="match status" value="1"/>
</dbReference>
<dbReference type="FunFam" id="2.10.25.10:FF:000169">
    <property type="entry name" value="teneurin-1 isoform X1"/>
    <property type="match status" value="1"/>
</dbReference>
<dbReference type="Gene3D" id="2.60.120.260">
    <property type="entry name" value="Galactose-binding domain-like"/>
    <property type="match status" value="1"/>
</dbReference>
<dbReference type="Gene3D" id="2.10.25.10">
    <property type="entry name" value="Laminin"/>
    <property type="match status" value="6"/>
</dbReference>
<dbReference type="Gene3D" id="2.180.10.10">
    <property type="entry name" value="RHS repeat-associated core"/>
    <property type="match status" value="1"/>
</dbReference>
<dbReference type="Gene3D" id="2.120.10.30">
    <property type="entry name" value="TolB, C-terminal domain"/>
    <property type="match status" value="2"/>
</dbReference>
<dbReference type="InterPro" id="IPR011042">
    <property type="entry name" value="6-blade_b-propeller_TolB-like"/>
</dbReference>
<dbReference type="InterPro" id="IPR008969">
    <property type="entry name" value="CarboxyPept-like_regulatory"/>
</dbReference>
<dbReference type="InterPro" id="IPR000742">
    <property type="entry name" value="EGF-like_dom"/>
</dbReference>
<dbReference type="InterPro" id="IPR009471">
    <property type="entry name" value="Ten_N"/>
</dbReference>
<dbReference type="InterPro" id="IPR056822">
    <property type="entry name" value="TEN_NHL"/>
</dbReference>
<dbReference type="InterPro" id="IPR056820">
    <property type="entry name" value="TEN_TTR-like"/>
</dbReference>
<dbReference type="InterPro" id="IPR056823">
    <property type="entry name" value="TEN_YD-shell"/>
</dbReference>
<dbReference type="InterPro" id="IPR051216">
    <property type="entry name" value="Teneurin"/>
</dbReference>
<dbReference type="InterPro" id="IPR028916">
    <property type="entry name" value="Tox-GHH_dom"/>
</dbReference>
<dbReference type="InterPro" id="IPR006530">
    <property type="entry name" value="YD"/>
</dbReference>
<dbReference type="NCBIfam" id="TIGR01643">
    <property type="entry name" value="YD_repeat_2x"/>
    <property type="match status" value="2"/>
</dbReference>
<dbReference type="PANTHER" id="PTHR11219">
    <property type="entry name" value="TENEURIN AND N-ACETYLGLUCOSAMINE-1-PHOSPHODIESTER ALPHA-N-ACETYLGLUCOSAMINIDASE"/>
    <property type="match status" value="1"/>
</dbReference>
<dbReference type="PANTHER" id="PTHR11219:SF7">
    <property type="entry name" value="TENEURIN-1"/>
    <property type="match status" value="1"/>
</dbReference>
<dbReference type="Pfam" id="PF25024">
    <property type="entry name" value="EGF_TEN"/>
    <property type="match status" value="1"/>
</dbReference>
<dbReference type="Pfam" id="PF24329">
    <property type="entry name" value="FN-plug_TEN1-4"/>
    <property type="match status" value="1"/>
</dbReference>
<dbReference type="Pfam" id="PF23093">
    <property type="entry name" value="GBD_Tenm3"/>
    <property type="match status" value="1"/>
</dbReference>
<dbReference type="Pfam" id="PF06484">
    <property type="entry name" value="Ten_N"/>
    <property type="match status" value="2"/>
</dbReference>
<dbReference type="Pfam" id="PF25021">
    <property type="entry name" value="TEN_NHL"/>
    <property type="match status" value="1"/>
</dbReference>
<dbReference type="Pfam" id="PF25023">
    <property type="entry name" value="TEN_YD-shell"/>
    <property type="match status" value="1"/>
</dbReference>
<dbReference type="Pfam" id="PF23538">
    <property type="entry name" value="Teneurin_ABD"/>
    <property type="match status" value="1"/>
</dbReference>
<dbReference type="Pfam" id="PF15636">
    <property type="entry name" value="Tox-GHH"/>
    <property type="match status" value="1"/>
</dbReference>
<dbReference type="Pfam" id="PF25020">
    <property type="entry name" value="TTR_TEN1-4"/>
    <property type="match status" value="1"/>
</dbReference>
<dbReference type="SMART" id="SM00181">
    <property type="entry name" value="EGF"/>
    <property type="match status" value="8"/>
</dbReference>
<dbReference type="SUPFAM" id="SSF49464">
    <property type="entry name" value="Carboxypeptidase regulatory domain-like"/>
    <property type="match status" value="1"/>
</dbReference>
<dbReference type="SUPFAM" id="SSF82171">
    <property type="entry name" value="DPP6 N-terminal domain-like"/>
    <property type="match status" value="1"/>
</dbReference>
<dbReference type="SUPFAM" id="SSF57196">
    <property type="entry name" value="EGF/Laminin"/>
    <property type="match status" value="2"/>
</dbReference>
<dbReference type="SUPFAM" id="SSF101898">
    <property type="entry name" value="NHL repeat"/>
    <property type="match status" value="1"/>
</dbReference>
<dbReference type="PROSITE" id="PS00022">
    <property type="entry name" value="EGF_1"/>
    <property type="match status" value="8"/>
</dbReference>
<dbReference type="PROSITE" id="PS01186">
    <property type="entry name" value="EGF_2"/>
    <property type="match status" value="7"/>
</dbReference>
<dbReference type="PROSITE" id="PS50026">
    <property type="entry name" value="EGF_3"/>
    <property type="match status" value="4"/>
</dbReference>
<dbReference type="PROSITE" id="PS51361">
    <property type="entry name" value="TENEURIN_N"/>
    <property type="match status" value="1"/>
</dbReference>
<accession>Q9W6V6</accession>
<proteinExistence type="evidence at protein level"/>
<reference key="1">
    <citation type="journal article" date="1999" name="J. Cell Sci.">
        <title>Teneurin-1, a vertebrate homologue of the Drosophila pair-rule gene ten-m, is a neuronal protein with a novel type of heparin-binding domain.</title>
        <authorList>
            <person name="Minet A.D."/>
            <person name="Rubin B.P."/>
            <person name="Tucker R.P."/>
            <person name="Baumgartner S."/>
            <person name="Chiquet-Ehrismann R."/>
        </authorList>
    </citation>
    <scope>NUCLEOTIDE SEQUENCE [MRNA]</scope>
    <scope>TISSUE SPECIFICITY</scope>
    <source>
        <tissue>Brain</tissue>
    </source>
</reference>
<reference key="2">
    <citation type="journal article" date="2005" name="Exp. Cell Res.">
        <title>The intracellular domain of teneurin-1 interacts with MBD1 and CAP/ponsin resulting in subcellular codistribution and translocation to the nuclear matrix.</title>
        <authorList>
            <person name="Nunes S.M."/>
            <person name="Ferralli J."/>
            <person name="Choi K."/>
            <person name="Brown-Luedi M."/>
            <person name="Minet A.D."/>
            <person name="Chiquet-Ehrismann R."/>
        </authorList>
    </citation>
    <scope>PROTEOLYTIC PROCESSING</scope>
    <scope>FUNCTION OF TEN-1 ICD</scope>
    <scope>INTERACTION WITH MBD1 AND SORBS1</scope>
    <scope>SUBCELLULAR LOCATION</scope>
</reference>
<reference key="3">
    <citation type="journal article" date="2008" name="BMC Dev. Biol.">
        <title>Teneurin-1 is expressed in interconnected regions of the developing brain and is processed in vivo.</title>
        <authorList>
            <person name="Kenzelmann D."/>
            <person name="Chiquet-Ehrismann R."/>
            <person name="Leachman N.T."/>
            <person name="Tucker R.P."/>
        </authorList>
    </citation>
    <scope>PROTEOLYTIC PROCESSING</scope>
    <scope>SUBCELLULAR LOCATION</scope>
    <scope>DEVELOPMENTAL STAGE</scope>
    <scope>MUTAGENESIS OF 62-ARG--LYS-65</scope>
</reference>
<sequence length="2705" mass="302388">MEQMDCKPYQPLSKVKHEVDLTYTSSSDESEDGRKQRQSYDSRETLNEYSQELRLNYNSQSRKRKNTDQSTQDMEFCETPHILCSGYQTDLHGVSEHSYPLEVGSDVDTETEGGASPDHALRMWMRGMKSEHSSCLSSRANSALSLTDTDHERKSDGENDMPGSPHNQFTFRPLPPPPPPPHACTCTRKPPPAADSLQRRSMTTRSQPSPAAPTPPTSTQDSVHLHNSWVLNSNIPLETRHFLFKHGSGSSAIFSAASQNYPLTSNTVYSPPPRPLPRNTFSRPAFTFSKPYRCCNWKCTALSATAITVTLALLLAYVIAVHLFGLTWQLQPVEGQLYENGVSKGNKGAESTDTTYSPIGGKVSDKTEKKVFQKGRAIDTGEVEIGAQVMQTIPPGLFWRFQITIHHPVYLKFNISLAKDSLLGIYGRRNIPPTHTQFDFVKLMDGKQLIKQEPKNSEEPQQAPRNLILTSLQETGFIEYMDQGAWHMAFYNDGKKVEQVFVLTTAIEVLDDCSTNCNGNGECISGHCHCFPGFLGPDCAKDSCPVLCSGNGEYEKGHCVCRNGWKGPECDVPEEQCIDPTCFGHGTCIMGVCICVPGYKGEICEEEDCLDPMCSGHGVCVQGECHCSAGWGGVNCETSLPICQEHCSGHGTFLLDVGLCSCEPQWTGSDCSTELCTLDCGSHGVCSRGICQCEEGWVGPTCEERTCHSHCAEHGQCKDGKCECSPGWEGDHCTIDGCPGLCYGNGRCTLDQNGWHCVCQVGWSGSGCNVVMEMACGDNLDNDGDGLTDCVDPDCCQQNNCYASPLCQGSPDPLDLIQHSQPPFSQHPPRLFYDRIRFLIGKESTHVIPGDISFESRRASVIRGQVVAIDGTPLVGVNVSFLHHDEYGYTISRQDGSFDLVAVGGISVTLVFDRSPFISEKRTLWLSWNRFVIVDKVVMQRAESDIPSCDVSSFISPNPIVLPSPLTAFGGSCPERGTVIPELQVVQEEIPIPSSFVKLSYLSSRTPGYKTLLRVILTHTTIPSGMTKVHLIIAVEGRLLQKWFPAAANLVYTFAWNKTDIYGQKVSGLAEAMVSVGYEYETCPDFILWEKRTVILQGFEMDASNLGGWSINKHHVLNPQSGIVHKGNGENMFISQQPPVISTMMGNGHQRSVSCSNCNGLALNSKLFAPVALTSGPDGSVYIGDFNFVRRIFPSGNSIGILELRNRDTRHSTSPAHKYYLAVDPVSESLYLSDTNTRRVYKAKSLIETKDLAKNVDVVAGTGDQCLPFDQSHCGDGGKASEASLNSPRGITIDKHGFIYFVDGTMIRKIDENGMITTIIGSNGLTSTQPLSCDSGMDITQVRLEWPTDLTVNPLDNSLYVLDNNIVLQISESRRVRIIAGRPIHCQVPGIDHFIVSKVAIHSTLESARAIAVSHSGIPYIRETDERKINRIQQVTTNGEISIIAGAPSDCDCKIDPNCDCFSGDGGYAKDAKLKAPSSLAVSPDDTLYVADLGNIRIRAVSRNKAHLSDTNMYEIASPADQELYQFTINGTHLHTLNLITRDYIYNFTYSGEGDVATITSSNGNSVHIRRDTSGLPLWVVVPGGQVYWLTISSNGVLKRVYAQGYNLALMTYPGNTGLLATKSDENGWTTVYEYDSDGHLTNATFPTGEVSSFHSDVEKLTRVELDTSNRENMVTATNFSATSTIYTLKQDNTQNIYRVSPDGSLRVTFASGMEITLNTEPHILAGVVSPTLGKCNISLPGEHNSNLIEWRQRREQTKGNISTFERRLRAHNRNLLSIDFDHVTRTGKIYDDHRKFTLRIMYDQTGRPVLWSPISKYNEVNITYSHSGLVTYIQRGTWTEKMEYDPSGNIISRTWADGKIWSYTYLEKSVMLLLHSQRRYIFEYDQSDYLLSVTMPSMVRHALQTMLSVGYYRNIYTPPDSGAAFIQDVTRDGRLLQTLYPGTGRRVLYKYSKQSRLSEILYDTTQVTFTYEESSGVIKTIHLMHDGFICTIRYRQTGPLIGRQIFRFSEEGLVNARFDYSYNNFRVTSMQAMINETPLPIDLYRYVDVSGRTEQFGKFSVINYDLNQVITTTVMKHTKIFSANGQVIEVQYEILKSIAYWMTIQYDNMGRMVICDIRVGVDANITRYFYEYDRDGQLQTVSVNDKTQWRYSYDLNGNINLLSHGNSARLTPLRYDLRDRITRLGEIQYKMDEDGFLRQRGNEIFEYNSNGLLNKAYNKVSGWTVQYCYDGLGRRVASKSSLGQHLQFFYADLSNPIRVTHLYNHSSSEITSLYYDLQGHLIAMELSSGEEYYVACDNTGTPLAVFSSRGQVIKEILYTPYGEIYQDTNPDFQVVIGFHGGLYDSLTKLVHLGQRDYDVIAGRWTTPNHHIWKHLNAVPQPFNLYSFENNYPVGRIQDVAKYTTDIGSWLELFGFQLHNVLPGFPKPEIEALETTYELLQLQTKTQEWDPGKTILGIQCELQKQLRNFISLDQLPMTPRYSDGKCYEGVKQPRFAAIPSVFGKGIKFAIKDGIVTADIIGVANEDSRRIAAILNNAHYLENLHFTIEGRDTHYFIKLGSLEEDLSLIGNTGGRRILENGVNVTVSQMTSVINGRTRRFADIQLQHGALCFNVRYGTTVEEEKNHVLEVARQRAVAQAWTKEQRRLQEGEEGIRAWTDGEKQQLLNTGRVQGYDGYFVLSVEQYLELSDSANNIHFMRQSEIGRR</sequence>
<protein>
    <recommendedName>
        <fullName>Teneurin-1</fullName>
        <shortName>Ten-1</shortName>
    </recommendedName>
    <alternativeName>
        <fullName>Protein Odd Oz/ten-m homolog 1</fullName>
    </alternativeName>
    <alternativeName>
        <fullName>Tenascin-M1</fullName>
        <shortName>Ten-m1</shortName>
    </alternativeName>
    <alternativeName>
        <fullName>Teneurin transmembrane protein 1</fullName>
    </alternativeName>
    <component>
        <recommendedName>
            <fullName>Ten-1 intracellular domain</fullName>
            <shortName>IDten-1</shortName>
            <shortName>Ten-1 ICD</shortName>
        </recommendedName>
    </component>
    <component>
        <recommendedName>
            <fullName>Teneurin C-terminal-associated peptide</fullName>
            <shortName>TCPA-1</shortName>
        </recommendedName>
        <alternativeName>
            <fullName>Ten-1 extracellular domain</fullName>
            <shortName>Ten-1 ECD</shortName>
        </alternativeName>
    </component>
</protein>
<gene>
    <name type="primary">TENM1</name>
    <name type="synonym">ODZ1</name>
    <name type="synonym">TNM1</name>
</gene>
<name>TEN1_CHICK</name>